<keyword id="KW-0028">Amino-acid biosynthesis</keyword>
<keyword id="KW-0055">Arginine biosynthesis</keyword>
<keyword id="KW-0067">ATP-binding</keyword>
<keyword id="KW-0963">Cytoplasm</keyword>
<keyword id="KW-0436">Ligase</keyword>
<keyword id="KW-0547">Nucleotide-binding</keyword>
<feature type="chain" id="PRO_1000025414" description="Argininosuccinate synthase">
    <location>
        <begin position="1"/>
        <end position="446"/>
    </location>
</feature>
<feature type="binding site" evidence="1">
    <location>
        <begin position="17"/>
        <end position="25"/>
    </location>
    <ligand>
        <name>ATP</name>
        <dbReference type="ChEBI" id="CHEBI:30616"/>
    </ligand>
</feature>
<feature type="binding site" evidence="1">
    <location>
        <position position="43"/>
    </location>
    <ligand>
        <name>ATP</name>
        <dbReference type="ChEBI" id="CHEBI:30616"/>
    </ligand>
</feature>
<feature type="binding site" evidence="1">
    <location>
        <position position="99"/>
    </location>
    <ligand>
        <name>L-citrulline</name>
        <dbReference type="ChEBI" id="CHEBI:57743"/>
    </ligand>
</feature>
<feature type="binding site" evidence="1">
    <location>
        <position position="129"/>
    </location>
    <ligand>
        <name>ATP</name>
        <dbReference type="ChEBI" id="CHEBI:30616"/>
    </ligand>
</feature>
<feature type="binding site" evidence="1">
    <location>
        <position position="131"/>
    </location>
    <ligand>
        <name>ATP</name>
        <dbReference type="ChEBI" id="CHEBI:30616"/>
    </ligand>
</feature>
<feature type="binding site" evidence="1">
    <location>
        <position position="131"/>
    </location>
    <ligand>
        <name>L-aspartate</name>
        <dbReference type="ChEBI" id="CHEBI:29991"/>
    </ligand>
</feature>
<feature type="binding site" evidence="1">
    <location>
        <position position="135"/>
    </location>
    <ligand>
        <name>L-aspartate</name>
        <dbReference type="ChEBI" id="CHEBI:29991"/>
    </ligand>
</feature>
<feature type="binding site" evidence="1">
    <location>
        <position position="135"/>
    </location>
    <ligand>
        <name>L-citrulline</name>
        <dbReference type="ChEBI" id="CHEBI:57743"/>
    </ligand>
</feature>
<feature type="binding site" evidence="1">
    <location>
        <position position="136"/>
    </location>
    <ligand>
        <name>ATP</name>
        <dbReference type="ChEBI" id="CHEBI:30616"/>
    </ligand>
</feature>
<feature type="binding site" evidence="1">
    <location>
        <position position="136"/>
    </location>
    <ligand>
        <name>L-aspartate</name>
        <dbReference type="ChEBI" id="CHEBI:29991"/>
    </ligand>
</feature>
<feature type="binding site" evidence="1">
    <location>
        <position position="139"/>
    </location>
    <ligand>
        <name>L-citrulline</name>
        <dbReference type="ChEBI" id="CHEBI:57743"/>
    </ligand>
</feature>
<feature type="binding site" evidence="1">
    <location>
        <position position="192"/>
    </location>
    <ligand>
        <name>L-citrulline</name>
        <dbReference type="ChEBI" id="CHEBI:57743"/>
    </ligand>
</feature>
<feature type="binding site" evidence="1">
    <location>
        <position position="194"/>
    </location>
    <ligand>
        <name>ATP</name>
        <dbReference type="ChEBI" id="CHEBI:30616"/>
    </ligand>
</feature>
<feature type="binding site" evidence="1">
    <location>
        <position position="201"/>
    </location>
    <ligand>
        <name>L-citrulline</name>
        <dbReference type="ChEBI" id="CHEBI:57743"/>
    </ligand>
</feature>
<feature type="binding site" evidence="1">
    <location>
        <position position="203"/>
    </location>
    <ligand>
        <name>L-citrulline</name>
        <dbReference type="ChEBI" id="CHEBI:57743"/>
    </ligand>
</feature>
<feature type="binding site" evidence="1">
    <location>
        <position position="280"/>
    </location>
    <ligand>
        <name>L-citrulline</name>
        <dbReference type="ChEBI" id="CHEBI:57743"/>
    </ligand>
</feature>
<sequence>MTTILENLPAGQKVGIAFSGGLDTSAALHWMRIKGAVPYAYTANLGQPDEDDYDAIPKRAIQYGAEGARLIDCRAQLVAEGIAALQCGAFHISTAGVTYFNTTPIGRAVTGTMLVAAMKEDGVNIWGDGSTYKGNDIERFYRYGLLVNPDLKIYKPWLDQQFIDELGGRAEMSEFMRQAGFEYKMSAEKAYSTDSNLLGATHEAKDLESLESGIKIVNPIMGVAFWRDDVKIDKEEVTIRFEEGRPVALNGVEYKDAVALLLEANRIGGRHGLGMSDQIENRIIEAKSRGIYEAPGLALLYIAYERLVTGIHNEDTIEQYRENGRRLGRLLYQGRWFDPQAIMLRETAQRWVARAVTGEVTVELRRGNDYSIIGTRSPNLTYQPERLSMEKVQSMFSPRDRIGQLTMRNLDITDTRDKLRIYSQVGLLAAGESSALPKLKEDESGN</sequence>
<comment type="catalytic activity">
    <reaction evidence="1">
        <text>L-citrulline + L-aspartate + ATP = 2-(N(omega)-L-arginino)succinate + AMP + diphosphate + H(+)</text>
        <dbReference type="Rhea" id="RHEA:10932"/>
        <dbReference type="ChEBI" id="CHEBI:15378"/>
        <dbReference type="ChEBI" id="CHEBI:29991"/>
        <dbReference type="ChEBI" id="CHEBI:30616"/>
        <dbReference type="ChEBI" id="CHEBI:33019"/>
        <dbReference type="ChEBI" id="CHEBI:57472"/>
        <dbReference type="ChEBI" id="CHEBI:57743"/>
        <dbReference type="ChEBI" id="CHEBI:456215"/>
        <dbReference type="EC" id="6.3.4.5"/>
    </reaction>
</comment>
<comment type="pathway">
    <text evidence="1">Amino-acid biosynthesis; L-arginine biosynthesis; L-arginine from L-ornithine and carbamoyl phosphate: step 2/3.</text>
</comment>
<comment type="subunit">
    <text evidence="1">Homotetramer.</text>
</comment>
<comment type="subcellular location">
    <subcellularLocation>
        <location evidence="1">Cytoplasm</location>
    </subcellularLocation>
</comment>
<comment type="similarity">
    <text evidence="1">Belongs to the argininosuccinate synthase family. Type 2 subfamily.</text>
</comment>
<dbReference type="EC" id="6.3.4.5" evidence="1"/>
<dbReference type="EMBL" id="CP000526">
    <property type="protein sequence ID" value="ABM50489.1"/>
    <property type="molecule type" value="Genomic_DNA"/>
</dbReference>
<dbReference type="RefSeq" id="WP_004189990.1">
    <property type="nucleotide sequence ID" value="NC_008785.1"/>
</dbReference>
<dbReference type="SMR" id="A1V7X3"/>
<dbReference type="GeneID" id="93058813"/>
<dbReference type="KEGG" id="bmv:BMASAVP1_A3032"/>
<dbReference type="HOGENOM" id="CLU_032784_4_1_4"/>
<dbReference type="UniPathway" id="UPA00068">
    <property type="reaction ID" value="UER00113"/>
</dbReference>
<dbReference type="GO" id="GO:0005737">
    <property type="term" value="C:cytoplasm"/>
    <property type="evidence" value="ECO:0007669"/>
    <property type="project" value="UniProtKB-SubCell"/>
</dbReference>
<dbReference type="GO" id="GO:0004055">
    <property type="term" value="F:argininosuccinate synthase activity"/>
    <property type="evidence" value="ECO:0007669"/>
    <property type="project" value="UniProtKB-UniRule"/>
</dbReference>
<dbReference type="GO" id="GO:0005524">
    <property type="term" value="F:ATP binding"/>
    <property type="evidence" value="ECO:0007669"/>
    <property type="project" value="UniProtKB-UniRule"/>
</dbReference>
<dbReference type="GO" id="GO:0042803">
    <property type="term" value="F:protein homodimerization activity"/>
    <property type="evidence" value="ECO:0007669"/>
    <property type="project" value="InterPro"/>
</dbReference>
<dbReference type="GO" id="GO:0000053">
    <property type="term" value="P:argininosuccinate metabolic process"/>
    <property type="evidence" value="ECO:0007669"/>
    <property type="project" value="TreeGrafter"/>
</dbReference>
<dbReference type="GO" id="GO:0006526">
    <property type="term" value="P:L-arginine biosynthetic process"/>
    <property type="evidence" value="ECO:0007669"/>
    <property type="project" value="UniProtKB-UniRule"/>
</dbReference>
<dbReference type="GO" id="GO:0000050">
    <property type="term" value="P:urea cycle"/>
    <property type="evidence" value="ECO:0007669"/>
    <property type="project" value="TreeGrafter"/>
</dbReference>
<dbReference type="CDD" id="cd01999">
    <property type="entry name" value="ASS"/>
    <property type="match status" value="1"/>
</dbReference>
<dbReference type="FunFam" id="1.10.287.400:FF:000001">
    <property type="entry name" value="Argininosuccinate synthase"/>
    <property type="match status" value="1"/>
</dbReference>
<dbReference type="Gene3D" id="1.10.287.400">
    <property type="match status" value="1"/>
</dbReference>
<dbReference type="Gene3D" id="3.90.1260.10">
    <property type="entry name" value="Argininosuccinate synthetase, chain A, domain 2"/>
    <property type="match status" value="1"/>
</dbReference>
<dbReference type="Gene3D" id="3.40.50.620">
    <property type="entry name" value="HUPs"/>
    <property type="match status" value="1"/>
</dbReference>
<dbReference type="HAMAP" id="MF_00581">
    <property type="entry name" value="Arg_succ_synth_type2"/>
    <property type="match status" value="1"/>
</dbReference>
<dbReference type="InterPro" id="IPR023437">
    <property type="entry name" value="Arg_succ_synth_type2_subfam"/>
</dbReference>
<dbReference type="InterPro" id="IPR048268">
    <property type="entry name" value="Arginosuc_syn_C"/>
</dbReference>
<dbReference type="InterPro" id="IPR048267">
    <property type="entry name" value="Arginosuc_syn_N"/>
</dbReference>
<dbReference type="InterPro" id="IPR001518">
    <property type="entry name" value="Arginosuc_synth"/>
</dbReference>
<dbReference type="InterPro" id="IPR018223">
    <property type="entry name" value="Arginosuc_synth_CS"/>
</dbReference>
<dbReference type="InterPro" id="IPR023434">
    <property type="entry name" value="Arginosuc_synth_type_1_subfam"/>
</dbReference>
<dbReference type="InterPro" id="IPR024074">
    <property type="entry name" value="AS_cat/multimer_dom_body"/>
</dbReference>
<dbReference type="InterPro" id="IPR024073">
    <property type="entry name" value="AS_multimer_C_tail"/>
</dbReference>
<dbReference type="InterPro" id="IPR014729">
    <property type="entry name" value="Rossmann-like_a/b/a_fold"/>
</dbReference>
<dbReference type="NCBIfam" id="TIGR00032">
    <property type="entry name" value="argG"/>
    <property type="match status" value="1"/>
</dbReference>
<dbReference type="NCBIfam" id="NF003779">
    <property type="entry name" value="PRK05370.1"/>
    <property type="match status" value="1"/>
</dbReference>
<dbReference type="PANTHER" id="PTHR11587">
    <property type="entry name" value="ARGININOSUCCINATE SYNTHASE"/>
    <property type="match status" value="1"/>
</dbReference>
<dbReference type="PANTHER" id="PTHR11587:SF2">
    <property type="entry name" value="ARGININOSUCCINATE SYNTHASE"/>
    <property type="match status" value="1"/>
</dbReference>
<dbReference type="Pfam" id="PF20979">
    <property type="entry name" value="Arginosuc_syn_C"/>
    <property type="match status" value="1"/>
</dbReference>
<dbReference type="Pfam" id="PF00764">
    <property type="entry name" value="Arginosuc_synth"/>
    <property type="match status" value="1"/>
</dbReference>
<dbReference type="SUPFAM" id="SSF52402">
    <property type="entry name" value="Adenine nucleotide alpha hydrolases-like"/>
    <property type="match status" value="1"/>
</dbReference>
<dbReference type="SUPFAM" id="SSF69864">
    <property type="entry name" value="Argininosuccinate synthetase, C-terminal domain"/>
    <property type="match status" value="1"/>
</dbReference>
<dbReference type="PROSITE" id="PS00564">
    <property type="entry name" value="ARGININOSUCCIN_SYN_1"/>
    <property type="match status" value="1"/>
</dbReference>
<dbReference type="PROSITE" id="PS00565">
    <property type="entry name" value="ARGININOSUCCIN_SYN_2"/>
    <property type="match status" value="1"/>
</dbReference>
<proteinExistence type="inferred from homology"/>
<protein>
    <recommendedName>
        <fullName evidence="1">Argininosuccinate synthase</fullName>
        <ecNumber evidence="1">6.3.4.5</ecNumber>
    </recommendedName>
    <alternativeName>
        <fullName evidence="1">Citrulline--aspartate ligase</fullName>
    </alternativeName>
</protein>
<name>ASSY_BURMS</name>
<reference key="1">
    <citation type="journal article" date="2010" name="Genome Biol. Evol.">
        <title>Continuing evolution of Burkholderia mallei through genome reduction and large-scale rearrangements.</title>
        <authorList>
            <person name="Losada L."/>
            <person name="Ronning C.M."/>
            <person name="DeShazer D."/>
            <person name="Woods D."/>
            <person name="Fedorova N."/>
            <person name="Kim H.S."/>
            <person name="Shabalina S.A."/>
            <person name="Pearson T.R."/>
            <person name="Brinkac L."/>
            <person name="Tan P."/>
            <person name="Nandi T."/>
            <person name="Crabtree J."/>
            <person name="Badger J."/>
            <person name="Beckstrom-Sternberg S."/>
            <person name="Saqib M."/>
            <person name="Schutzer S.E."/>
            <person name="Keim P."/>
            <person name="Nierman W.C."/>
        </authorList>
    </citation>
    <scope>NUCLEOTIDE SEQUENCE [LARGE SCALE GENOMIC DNA]</scope>
    <source>
        <strain>SAVP1</strain>
    </source>
</reference>
<gene>
    <name evidence="1" type="primary">argG</name>
    <name type="ordered locus">BMASAVP1_A3032</name>
</gene>
<evidence type="ECO:0000255" key="1">
    <source>
        <dbReference type="HAMAP-Rule" id="MF_00581"/>
    </source>
</evidence>
<organism>
    <name type="scientific">Burkholderia mallei (strain SAVP1)</name>
    <dbReference type="NCBI Taxonomy" id="320388"/>
    <lineage>
        <taxon>Bacteria</taxon>
        <taxon>Pseudomonadati</taxon>
        <taxon>Pseudomonadota</taxon>
        <taxon>Betaproteobacteria</taxon>
        <taxon>Burkholderiales</taxon>
        <taxon>Burkholderiaceae</taxon>
        <taxon>Burkholderia</taxon>
        <taxon>pseudomallei group</taxon>
    </lineage>
</organism>
<accession>A1V7X3</accession>